<name>VTSS1_SOLTU</name>
<feature type="chain" id="PRO_0000398187" description="Vetispiradiene synthase 1">
    <location>
        <begin position="1"/>
        <end position="556"/>
    </location>
</feature>
<feature type="short sequence motif" description="DDXXD motif">
    <location>
        <begin position="309"/>
        <end position="313"/>
    </location>
</feature>
<feature type="binding site" evidence="1">
    <location>
        <position position="309"/>
    </location>
    <ligand>
        <name>Mg(2+)</name>
        <dbReference type="ChEBI" id="CHEBI:18420"/>
        <label>1</label>
    </ligand>
</feature>
<feature type="binding site" evidence="1">
    <location>
        <position position="309"/>
    </location>
    <ligand>
        <name>Mg(2+)</name>
        <dbReference type="ChEBI" id="CHEBI:18420"/>
        <label>2</label>
    </ligand>
</feature>
<feature type="binding site" evidence="1">
    <location>
        <position position="313"/>
    </location>
    <ligand>
        <name>Mg(2+)</name>
        <dbReference type="ChEBI" id="CHEBI:18420"/>
        <label>1</label>
    </ligand>
</feature>
<feature type="binding site" evidence="1">
    <location>
        <position position="313"/>
    </location>
    <ligand>
        <name>Mg(2+)</name>
        <dbReference type="ChEBI" id="CHEBI:18420"/>
        <label>2</label>
    </ligand>
</feature>
<feature type="binding site" evidence="1">
    <location>
        <position position="452"/>
    </location>
    <ligand>
        <name>Mg(2+)</name>
        <dbReference type="ChEBI" id="CHEBI:18420"/>
        <label>3</label>
    </ligand>
</feature>
<feature type="binding site" evidence="1">
    <location>
        <position position="456"/>
    </location>
    <ligand>
        <name>Mg(2+)</name>
        <dbReference type="ChEBI" id="CHEBI:18420"/>
        <label>3</label>
    </ligand>
</feature>
<feature type="binding site" evidence="1">
    <location>
        <position position="460"/>
    </location>
    <ligand>
        <name>Mg(2+)</name>
        <dbReference type="ChEBI" id="CHEBI:18420"/>
        <label>3</label>
    </ligand>
</feature>
<dbReference type="EC" id="4.2.3.21"/>
<dbReference type="EMBL" id="AB022598">
    <property type="protein sequence ID" value="BAA82092.1"/>
    <property type="molecule type" value="mRNA"/>
</dbReference>
<dbReference type="SMR" id="Q9XJ32"/>
<dbReference type="FunCoup" id="Q9XJ32">
    <property type="interactions" value="13"/>
</dbReference>
<dbReference type="STRING" id="4113.Q9XJ32"/>
<dbReference type="PaxDb" id="4113-PGSC0003DMT400046973"/>
<dbReference type="eggNOG" id="ENOG502QUCN">
    <property type="taxonomic scope" value="Eukaryota"/>
</dbReference>
<dbReference type="InParanoid" id="Q9XJ32"/>
<dbReference type="BRENDA" id="4.2.3.21">
    <property type="organism ID" value="5757"/>
</dbReference>
<dbReference type="UniPathway" id="UPA00213"/>
<dbReference type="Proteomes" id="UP000011115">
    <property type="component" value="Unassembled WGS sequence"/>
</dbReference>
<dbReference type="ExpressionAtlas" id="Q9XJ32">
    <property type="expression patterns" value="baseline"/>
</dbReference>
<dbReference type="GO" id="GO:0005737">
    <property type="term" value="C:cytoplasm"/>
    <property type="evidence" value="ECO:0007669"/>
    <property type="project" value="UniProtKB-SubCell"/>
</dbReference>
<dbReference type="GO" id="GO:0000287">
    <property type="term" value="F:magnesium ion binding"/>
    <property type="evidence" value="ECO:0007669"/>
    <property type="project" value="InterPro"/>
</dbReference>
<dbReference type="GO" id="GO:0034003">
    <property type="term" value="F:vetispiradiene synthase activity"/>
    <property type="evidence" value="ECO:0007669"/>
    <property type="project" value="UniProtKB-EC"/>
</dbReference>
<dbReference type="GO" id="GO:0016102">
    <property type="term" value="P:diterpenoid biosynthetic process"/>
    <property type="evidence" value="ECO:0007669"/>
    <property type="project" value="InterPro"/>
</dbReference>
<dbReference type="CDD" id="cd00684">
    <property type="entry name" value="Terpene_cyclase_plant_C1"/>
    <property type="match status" value="1"/>
</dbReference>
<dbReference type="FunFam" id="1.10.600.10:FF:000007">
    <property type="entry name" value="Isoprene synthase, chloroplastic"/>
    <property type="match status" value="1"/>
</dbReference>
<dbReference type="FunFam" id="1.50.10.130:FF:000001">
    <property type="entry name" value="Isoprene synthase, chloroplastic"/>
    <property type="match status" value="1"/>
</dbReference>
<dbReference type="Gene3D" id="1.10.600.10">
    <property type="entry name" value="Farnesyl Diphosphate Synthase"/>
    <property type="match status" value="1"/>
</dbReference>
<dbReference type="Gene3D" id="1.50.10.130">
    <property type="entry name" value="Terpene synthase, N-terminal domain"/>
    <property type="match status" value="1"/>
</dbReference>
<dbReference type="InterPro" id="IPR008949">
    <property type="entry name" value="Isoprenoid_synthase_dom_sf"/>
</dbReference>
<dbReference type="InterPro" id="IPR034741">
    <property type="entry name" value="Terpene_cyclase-like_1_C"/>
</dbReference>
<dbReference type="InterPro" id="IPR044814">
    <property type="entry name" value="Terpene_cyclase_plant_C1"/>
</dbReference>
<dbReference type="InterPro" id="IPR001906">
    <property type="entry name" value="Terpene_synth_N"/>
</dbReference>
<dbReference type="InterPro" id="IPR036965">
    <property type="entry name" value="Terpene_synth_N_sf"/>
</dbReference>
<dbReference type="InterPro" id="IPR050148">
    <property type="entry name" value="Terpene_synthase-like"/>
</dbReference>
<dbReference type="InterPro" id="IPR005630">
    <property type="entry name" value="Terpene_synthase_metal-bd"/>
</dbReference>
<dbReference type="InterPro" id="IPR008930">
    <property type="entry name" value="Terpenoid_cyclase/PrenylTrfase"/>
</dbReference>
<dbReference type="PANTHER" id="PTHR31225">
    <property type="entry name" value="OS04G0344100 PROTEIN-RELATED"/>
    <property type="match status" value="1"/>
</dbReference>
<dbReference type="PANTHER" id="PTHR31225:SF253">
    <property type="entry name" value="SESQUITERPENE SYNTHASE 31"/>
    <property type="match status" value="1"/>
</dbReference>
<dbReference type="Pfam" id="PF01397">
    <property type="entry name" value="Terpene_synth"/>
    <property type="match status" value="1"/>
</dbReference>
<dbReference type="Pfam" id="PF03936">
    <property type="entry name" value="Terpene_synth_C"/>
    <property type="match status" value="1"/>
</dbReference>
<dbReference type="SFLD" id="SFLDG01019">
    <property type="entry name" value="Terpene_Cyclase_Like_1_C_Termi"/>
    <property type="match status" value="1"/>
</dbReference>
<dbReference type="SFLD" id="SFLDG01604">
    <property type="entry name" value="Terpene_Cyclase_Like_1_C_Termi"/>
    <property type="match status" value="1"/>
</dbReference>
<dbReference type="SUPFAM" id="SSF48239">
    <property type="entry name" value="Terpenoid cyclases/Protein prenyltransferases"/>
    <property type="match status" value="1"/>
</dbReference>
<dbReference type="SUPFAM" id="SSF48576">
    <property type="entry name" value="Terpenoid synthases"/>
    <property type="match status" value="1"/>
</dbReference>
<organism>
    <name type="scientific">Solanum tuberosum</name>
    <name type="common">Potato</name>
    <dbReference type="NCBI Taxonomy" id="4113"/>
    <lineage>
        <taxon>Eukaryota</taxon>
        <taxon>Viridiplantae</taxon>
        <taxon>Streptophyta</taxon>
        <taxon>Embryophyta</taxon>
        <taxon>Tracheophyta</taxon>
        <taxon>Spermatophyta</taxon>
        <taxon>Magnoliopsida</taxon>
        <taxon>eudicotyledons</taxon>
        <taxon>Gunneridae</taxon>
        <taxon>Pentapetalae</taxon>
        <taxon>asterids</taxon>
        <taxon>lamiids</taxon>
        <taxon>Solanales</taxon>
        <taxon>Solanaceae</taxon>
        <taxon>Solanoideae</taxon>
        <taxon>Solaneae</taxon>
        <taxon>Solanum</taxon>
    </lineage>
</organism>
<gene>
    <name type="primary">PVS1</name>
</gene>
<keyword id="KW-0963">Cytoplasm</keyword>
<keyword id="KW-0456">Lyase</keyword>
<keyword id="KW-0460">Magnesium</keyword>
<keyword id="KW-0479">Metal-binding</keyword>
<keyword id="KW-1185">Reference proteome</keyword>
<accession>Q9XJ32</accession>
<comment type="function">
    <text>Sesquiterpene synthase that catalyzes the formation of vetispiradiene from trans,trans-farnesyl diphosphate. The initial internal cyclization produces the monocyclic intermediate germacrene A.</text>
</comment>
<comment type="catalytic activity">
    <reaction evidence="2">
        <text>(2E,6E)-farnesyl diphosphate = (-)-vetispiradiene + diphosphate</text>
        <dbReference type="Rhea" id="RHEA:10340"/>
        <dbReference type="ChEBI" id="CHEBI:33019"/>
        <dbReference type="ChEBI" id="CHEBI:46971"/>
        <dbReference type="ChEBI" id="CHEBI:175763"/>
        <dbReference type="EC" id="4.2.3.21"/>
    </reaction>
</comment>
<comment type="cofactor">
    <cofactor evidence="1">
        <name>Mg(2+)</name>
        <dbReference type="ChEBI" id="CHEBI:18420"/>
    </cofactor>
    <text evidence="1">Binds 3 Mg(2+) ions per subunit.</text>
</comment>
<comment type="pathway">
    <text>Secondary metabolite biosynthesis; terpenoid biosynthesis.</text>
</comment>
<comment type="subcellular location">
    <subcellularLocation>
        <location evidence="3">Cytoplasm</location>
    </subcellularLocation>
</comment>
<comment type="induction">
    <text evidence="2">By infection with P.infestans.</text>
</comment>
<comment type="domain">
    <text>The Asp-Asp-Xaa-Xaa-Asp/Glu (DDXXD/E) motif is important for the catalytic activity, presumably through binding to Mg(2+).</text>
</comment>
<comment type="similarity">
    <text evidence="3">Belongs to the terpene synthase family. Tpsa subfamily.</text>
</comment>
<protein>
    <recommendedName>
        <fullName>Vetispiradiene synthase 1</fullName>
        <ecNumber>4.2.3.21</ecNumber>
    </recommendedName>
</protein>
<evidence type="ECO:0000250" key="1"/>
<evidence type="ECO:0000269" key="2">
    <source>
    </source>
</evidence>
<evidence type="ECO:0000305" key="3"/>
<sequence length="556" mass="64459">MTPAAVVMSNYGEEEIVRPIADFSPSLWGDRFHSFSLDNQIAGKYAQEIETLKEQSRIILSASSRRTLAEKLDLIDIVERLGIAYHFEKQIDDMLDQFYKADPNFEAHEYNDLQTLSVQFRLLRQHGYNISPKLFIRFQDAKGKFKESLCNDIKGLLNLYEASHVRTHGEDILEEALAFSTAHLESAAPHLKSPLSKQVTHALEQSLHKSIPRVETRYFISIYEEEEQKNDVLLQFAKLDFNLLQMLHKQELSEVSRWWKDLDFVTTLPYARDRAVECYFWTMGVYAEPQYSQARVMLAKTIAMISIVDDTFDAYGIVKELEIYTDAIQRWDISQIDRLPDYMKISYKALLDLYNDYEMELSKDGRSDVVHYAKERMKEIVRNYFVEAKWFIEGYMPPVSEYLSNALATSTYYLLTTTSYLGMKSANKQDFEWLAKNPKILEANVTLCRVIDDIATYEVEKGRGQIATGIECYMRDYGVSTEKAMEKFQEMAETAWKDVNEGILRPTPVSTEILTRILNLARIIDVTYKHNQDGYTHPEKVLKPHIIALLVDSIEI</sequence>
<reference key="1">
    <citation type="journal article" date="1999" name="Plant Cell Physiol.">
        <title>cDNA cloning of sesquiterpene cyclase and squalene synthase, and expression of the genes in potato tuber infected with Phytophthora infestans.</title>
        <authorList>
            <person name="Yoshioka H."/>
            <person name="Yamada N."/>
            <person name="Doke N."/>
        </authorList>
    </citation>
    <scope>NUCLEOTIDE SEQUENCE [MRNA]</scope>
    <scope>CATALYTIC ACTIVITY</scope>
    <scope>INDUCTION BY PATHOGEN</scope>
    <source>
        <strain>cv. Rishiri</strain>
        <tissue>Tuber</tissue>
    </source>
</reference>
<proteinExistence type="evidence at protein level"/>